<feature type="signal peptide" evidence="2">
    <location>
        <begin position="1"/>
        <end position="24"/>
    </location>
</feature>
<feature type="chain" id="PRO_0000038197" description="Envelope glycoprotein C">
    <location>
        <begin position="25"/>
        <end position="511"/>
    </location>
</feature>
<feature type="topological domain" description="Virion surface" evidence="2">
    <location>
        <begin position="25"/>
        <end position="480"/>
    </location>
</feature>
<feature type="transmembrane region" description="Helical" evidence="2">
    <location>
        <begin position="481"/>
        <end position="497"/>
    </location>
</feature>
<feature type="topological domain" description="Cytoplasmic" evidence="2">
    <location>
        <begin position="498"/>
        <end position="511"/>
    </location>
</feature>
<feature type="domain" description="Ig-like">
    <location>
        <begin position="267"/>
        <end position="359"/>
    </location>
</feature>
<feature type="region of interest" description="Disordered" evidence="4">
    <location>
        <begin position="42"/>
        <end position="130"/>
    </location>
</feature>
<feature type="region of interest" description="Heparin-binding domain" evidence="1">
    <location>
        <begin position="137"/>
        <end position="151"/>
    </location>
</feature>
<feature type="compositionally biased region" description="Low complexity" evidence="4">
    <location>
        <begin position="43"/>
        <end position="80"/>
    </location>
</feature>
<feature type="glycosylation site" description="N-linked (GlcNAc...) asparagine; by host" evidence="2">
    <location>
        <position position="42"/>
    </location>
</feature>
<feature type="glycosylation site" description="N-linked (GlcNAc...) asparagine; by host" evidence="2">
    <location>
        <position position="70"/>
    </location>
</feature>
<feature type="glycosylation site" description="N-linked (GlcNAc...) asparagine; by host" evidence="2">
    <location>
        <position position="74"/>
    </location>
</feature>
<feature type="glycosylation site" description="N-linked (GlcNAc...) asparagine; by host" evidence="2">
    <location>
        <position position="108"/>
    </location>
</feature>
<feature type="glycosylation site" description="N-linked (GlcNAc...) asparagine; by host" evidence="2">
    <location>
        <position position="148"/>
    </location>
</feature>
<feature type="glycosylation site" description="N-linked (GlcNAc...) asparagine; by host" evidence="2">
    <location>
        <position position="181"/>
    </location>
</feature>
<feature type="glycosylation site" description="N-linked (GlcNAc...) asparagine; by host" evidence="2">
    <location>
        <position position="197"/>
    </location>
</feature>
<feature type="glycosylation site" description="N-linked (GlcNAc...) asparagine; by host" evidence="2">
    <location>
        <position position="362"/>
    </location>
</feature>
<feature type="disulfide bond" evidence="3 6">
    <location>
        <begin position="127"/>
        <end position="144"/>
    </location>
</feature>
<feature type="disulfide bond" evidence="3 6">
    <location>
        <begin position="286"/>
        <end position="347"/>
    </location>
</feature>
<feature type="disulfide bond" evidence="3 6">
    <location>
        <begin position="386"/>
        <end position="442"/>
    </location>
</feature>
<feature type="disulfide bond" evidence="3 6">
    <location>
        <begin position="390"/>
        <end position="419"/>
    </location>
</feature>
<feature type="splice variant" id="VSP_040892" description="In isoform gCsec." evidence="7">
    <original>VIEAIEWVGIGIGVLAAGVLVVTAIVYVVRTSQSRQRHRR</original>
    <variation>VILGRSRTTHGVEQNASP</variation>
    <location>
        <begin position="472"/>
        <end position="511"/>
    </location>
</feature>
<protein>
    <recommendedName>
        <fullName>Envelope glycoprotein C</fullName>
    </recommendedName>
</protein>
<gene>
    <name type="primary">gC</name>
    <name type="synonym">UL44</name>
</gene>
<proteinExistence type="evidence at protein level"/>
<comment type="function">
    <text evidence="1">Major attachment protein that mediates binding of the virus to cell surface heparan sulfate or chondroitin sulfate. Also plays several roles in host immune evasion by inhibiting the host complement cascade activation, and by providing a shield against neutralizing antibodies that interfere with gB-gD, gB-gH/gL or gD-gH/gL interactions (By similarity).</text>
</comment>
<comment type="subunit">
    <text evidence="5">Interacts with host complement component C3b; this interaction inhibits host immune response by disregulating complement cascade.</text>
</comment>
<comment type="subcellular location">
    <subcellularLocation>
        <location evidence="7">Virion membrane</location>
        <topology evidence="7">Single-pass membrane protein</topology>
    </subcellularLocation>
</comment>
<comment type="alternative products">
    <event type="alternative splicing"/>
    <event type="alternative initiation"/>
    <isoform>
        <id>P10228-1</id>
        <name>gC</name>
        <sequence type="displayed"/>
    </isoform>
    <isoform>
        <id>P10228-2</id>
        <name>gCsec</name>
        <sequence type="described" ref="VSP_040892"/>
    </isoform>
</comment>
<comment type="miscellaneous">
    <text>There are seven external glycoproteins in HSV-1 and 2: gH, gB, gC, gG, gD, gI, and gE.</text>
</comment>
<comment type="miscellaneous">
    <molecule>Isoform gC</molecule>
    <text>Membrane-bound gC.</text>
</comment>
<comment type="miscellaneous">
    <molecule>Isoform gCsec</molecule>
    <text evidence="7">Secreted.</text>
</comment>
<comment type="similarity">
    <text evidence="7">Belongs to the herpesviridae glycoprotein C family.</text>
</comment>
<organismHost>
    <name type="scientific">Homo sapiens</name>
    <name type="common">Human</name>
    <dbReference type="NCBI Taxonomy" id="9606"/>
</organismHost>
<keyword id="KW-0024">Alternative initiation</keyword>
<keyword id="KW-0025">Alternative splicing</keyword>
<keyword id="KW-1015">Disulfide bond</keyword>
<keyword id="KW-0325">Glycoprotein</keyword>
<keyword id="KW-0945">Host-virus interaction</keyword>
<keyword id="KW-0393">Immunoglobulin domain</keyword>
<keyword id="KW-1087">Inhibition of host complement factors by virus</keyword>
<keyword id="KW-0472">Membrane</keyword>
<keyword id="KW-1185">Reference proteome</keyword>
<keyword id="KW-0732">Signal</keyword>
<keyword id="KW-0812">Transmembrane</keyword>
<keyword id="KW-1133">Transmembrane helix</keyword>
<keyword id="KW-1233">Viral attachment to host adhesion receptor</keyword>
<keyword id="KW-1161">Viral attachment to host cell</keyword>
<keyword id="KW-0899">Viral immunoevasion</keyword>
<keyword id="KW-0946">Virion</keyword>
<keyword id="KW-1160">Virus entry into host cell</keyword>
<reference key="1">
    <citation type="journal article" date="1988" name="J. Gen. Virol.">
        <title>The complete DNA sequence of the long unique region in the genome of herpes simplex virus type 1.</title>
        <authorList>
            <person name="McGeoch D.J."/>
            <person name="Dalrymple M.A."/>
            <person name="Davison A.J."/>
            <person name="Dolan A."/>
            <person name="Frame M.C."/>
            <person name="McNab D."/>
            <person name="Perry L.J."/>
            <person name="Scott J.E."/>
            <person name="Taylor P."/>
        </authorList>
    </citation>
    <scope>NUCLEOTIDE SEQUENCE [GENOMIC DNA]</scope>
</reference>
<reference key="2">
    <citation type="journal article" date="1987" name="Microb. Pathog.">
        <title>Complement component C3b binds directly to purified glycoprotein C of herpes simplex virus types 1 and 2.</title>
        <authorList>
            <person name="Eisenberg R.J."/>
            <person name="Ponce de Leon M."/>
            <person name="Friedman H.M."/>
            <person name="Fries L.F."/>
            <person name="Frank M.M."/>
            <person name="Hastings J.C."/>
            <person name="Cohen G.H."/>
        </authorList>
    </citation>
    <scope>INTERACTION WITH HOST C3</scope>
</reference>
<reference key="3">
    <citation type="journal article" date="1996" name="J. Virol.">
        <title>Disulfide bond structure determination and biochemical analysis of glycoprotein C from herpes simplex virus.</title>
        <authorList>
            <person name="Rux A.H."/>
            <person name="Moore W.T."/>
            <person name="Lambris J.D."/>
            <person name="Abrams W.R."/>
            <person name="Peng C."/>
            <person name="Friedman H.M."/>
            <person name="Cohen G.H."/>
            <person name="Eisenberg R.J."/>
        </authorList>
    </citation>
    <scope>DISULFIDE BONDS</scope>
</reference>
<evidence type="ECO:0000250" key="1"/>
<evidence type="ECO:0000255" key="2"/>
<evidence type="ECO:0000255" key="3">
    <source>
        <dbReference type="PROSITE-ProRule" id="PRU00114"/>
    </source>
</evidence>
<evidence type="ECO:0000256" key="4">
    <source>
        <dbReference type="SAM" id="MobiDB-lite"/>
    </source>
</evidence>
<evidence type="ECO:0000269" key="5">
    <source>
    </source>
</evidence>
<evidence type="ECO:0000269" key="6">
    <source>
    </source>
</evidence>
<evidence type="ECO:0000305" key="7"/>
<name>GC_HHV11</name>
<organism>
    <name type="scientific">Human herpesvirus 1 (strain 17)</name>
    <name type="common">HHV-1</name>
    <name type="synonym">Human herpes simplex virus 1</name>
    <dbReference type="NCBI Taxonomy" id="10299"/>
    <lineage>
        <taxon>Viruses</taxon>
        <taxon>Duplodnaviria</taxon>
        <taxon>Heunggongvirae</taxon>
        <taxon>Peploviricota</taxon>
        <taxon>Herviviricetes</taxon>
        <taxon>Herpesvirales</taxon>
        <taxon>Orthoherpesviridae</taxon>
        <taxon>Alphaherpesvirinae</taxon>
        <taxon>Simplexvirus</taxon>
        <taxon>Simplexvirus humanalpha1</taxon>
        <taxon>Human herpesvirus 1</taxon>
    </lineage>
</organism>
<dbReference type="EMBL" id="X14112">
    <property type="protein sequence ID" value="CAA32294.1"/>
    <property type="molecule type" value="Genomic_DNA"/>
</dbReference>
<dbReference type="PIR" id="H30088">
    <property type="entry name" value="VGBEF4"/>
</dbReference>
<dbReference type="IntAct" id="P10228">
    <property type="interactions" value="2"/>
</dbReference>
<dbReference type="ChEMBL" id="CHEMBL2364696"/>
<dbReference type="DrugCentral" id="P10228"/>
<dbReference type="GlyCosmos" id="P10228">
    <property type="glycosylation" value="8 sites, No reported glycans"/>
</dbReference>
<dbReference type="Proteomes" id="UP000009294">
    <property type="component" value="Segment"/>
</dbReference>
<dbReference type="GO" id="GO:0016020">
    <property type="term" value="C:membrane"/>
    <property type="evidence" value="ECO:0007669"/>
    <property type="project" value="UniProtKB-KW"/>
</dbReference>
<dbReference type="GO" id="GO:0055036">
    <property type="term" value="C:virion membrane"/>
    <property type="evidence" value="ECO:0007669"/>
    <property type="project" value="UniProtKB-SubCell"/>
</dbReference>
<dbReference type="GO" id="GO:0001848">
    <property type="term" value="F:complement binding"/>
    <property type="evidence" value="ECO:0000353"/>
    <property type="project" value="AgBase"/>
</dbReference>
<dbReference type="GO" id="GO:0141018">
    <property type="term" value="P:adhesion of symbiont to host via host extracellular matrix"/>
    <property type="evidence" value="ECO:0000269"/>
    <property type="project" value="SigSci"/>
</dbReference>
<dbReference type="GO" id="GO:0098671">
    <property type="term" value="P:adhesion receptor-mediated virion attachment to host cell"/>
    <property type="evidence" value="ECO:0007669"/>
    <property type="project" value="UniProtKB-KW"/>
</dbReference>
<dbReference type="GO" id="GO:0046718">
    <property type="term" value="P:symbiont entry into host cell"/>
    <property type="evidence" value="ECO:0007669"/>
    <property type="project" value="UniProtKB-KW"/>
</dbReference>
<dbReference type="GO" id="GO:0042784">
    <property type="term" value="P:symbiont-mediated suppression of host complement activation"/>
    <property type="evidence" value="ECO:0007669"/>
    <property type="project" value="UniProtKB-KW"/>
</dbReference>
<dbReference type="Gene3D" id="2.60.40.10">
    <property type="entry name" value="Immunoglobulins"/>
    <property type="match status" value="1"/>
</dbReference>
<dbReference type="InterPro" id="IPR001038">
    <property type="entry name" value="GA_GC"/>
</dbReference>
<dbReference type="InterPro" id="IPR007110">
    <property type="entry name" value="Ig-like_dom"/>
</dbReference>
<dbReference type="InterPro" id="IPR036179">
    <property type="entry name" value="Ig-like_dom_sf"/>
</dbReference>
<dbReference type="InterPro" id="IPR013783">
    <property type="entry name" value="Ig-like_fold"/>
</dbReference>
<dbReference type="Pfam" id="PF02124">
    <property type="entry name" value="Marek_A"/>
    <property type="match status" value="1"/>
</dbReference>
<dbReference type="PRINTS" id="PR00668">
    <property type="entry name" value="GLYCPROTEINC"/>
</dbReference>
<dbReference type="SUPFAM" id="SSF48726">
    <property type="entry name" value="Immunoglobulin"/>
    <property type="match status" value="1"/>
</dbReference>
<dbReference type="PROSITE" id="PS50835">
    <property type="entry name" value="IG_LIKE"/>
    <property type="match status" value="1"/>
</dbReference>
<accession>P10228</accession>
<sequence length="511" mass="54998">MAPGRVGLAVVLWSLLWLGAGVSGGSETASTGPTITAGAVTNASEAPTSGSPGSAASPEVTPTSTPNPNNVTQNKTTPTEPASPPTTPKPTSTPKSPPTSTPDPKPKNNTTPAKSGRPTKPPGPVWCDRRDPLARYGSRVQIRCRFRNSTRMEFRLQIWRYSMGPSPPIAPAPDLEEVLTNITAPPGGLLVYDSAPNLTDPHVLWAEGAGPGADPPLYSVTGPLPTQRLIIGEVTPATQGMYYLAWGRMDSPHEYGTWVRVRMFRPPSLTLQPHAVMEGQPFKATCTAAAYYPRNPVEFVWFEDDHQVFNPGQIDTQTHEHPDGFTTVSTVTSEAVGGQVPPRTFTCQMTWHRDSVTFSRRNATGLALVLPRPTITMEFGVRIVVCTAGCVPEGVTFAWFLGDDPSPAAKSAVTAQESCDHPGLATVRSTLPISYDYSEYICRLTGYPAGIPVLEHHGSHQPPPRDPTERQVIEAIEWVGIGIGVLAAGVLVVTAIVYVVRTSQSRQRHRR</sequence>